<gene>
    <name evidence="1" type="primary">proA</name>
    <name type="ordered locus">SAG0284</name>
</gene>
<name>PROA_STRA5</name>
<feature type="chain" id="PRO_0000189784" description="Gamma-glutamyl phosphate reductase">
    <location>
        <begin position="1"/>
        <end position="417"/>
    </location>
</feature>
<protein>
    <recommendedName>
        <fullName evidence="1">Gamma-glutamyl phosphate reductase</fullName>
        <shortName evidence="1">GPR</shortName>
        <ecNumber evidence="1">1.2.1.41</ecNumber>
    </recommendedName>
    <alternativeName>
        <fullName evidence="1">Glutamate-5-semialdehyde dehydrogenase</fullName>
    </alternativeName>
    <alternativeName>
        <fullName evidence="1">Glutamyl-gamma-semialdehyde dehydrogenase</fullName>
        <shortName evidence="1">GSA dehydrogenase</shortName>
    </alternativeName>
</protein>
<sequence>MTYIEILGQNAKKASQSVARLSTASKNEILRDLARNIVADTETILTENARDVVKAKDNGISEIMVDRLRLNKDRIQAIANGIYQVADLADPIGQVVSGYTNLDGLKILKKRVPLGVIAMIFESRPNVSVDAFSLAFKTGNAIILRGGKDAIFSNTALVNCMRQTLQDTGHNPDIVQLVEDTSHVVAEELMQATDYVDVLIPRGGAKLIQTVKEKSKIPVIETGVGNVHIYIDEFADLDMAAKIVINAKTQRPSVCNAAEGLVVHQAIAKGFLSQLEKMLKESNQSVEFRADEEALQLLENAVAASESDYATEFLDYIMSVKVVDSFEQAISWINKYSSHHSEAIITNNISRAEIFQDMVDAAAVYVNASTRFTDGFVFGLGAEIGISTQKLHARGPMGLEALTSTKYYINGTGQVRE</sequence>
<reference key="1">
    <citation type="journal article" date="2002" name="Proc. Natl. Acad. Sci. U.S.A.">
        <title>Complete genome sequence and comparative genomic analysis of an emerging human pathogen, serotype V Streptococcus agalactiae.</title>
        <authorList>
            <person name="Tettelin H."/>
            <person name="Masignani V."/>
            <person name="Cieslewicz M.J."/>
            <person name="Eisen J.A."/>
            <person name="Peterson S.N."/>
            <person name="Wessels M.R."/>
            <person name="Paulsen I.T."/>
            <person name="Nelson K.E."/>
            <person name="Margarit I."/>
            <person name="Read T.D."/>
            <person name="Madoff L.C."/>
            <person name="Wolf A.M."/>
            <person name="Beanan M.J."/>
            <person name="Brinkac L.M."/>
            <person name="Daugherty S.C."/>
            <person name="DeBoy R.T."/>
            <person name="Durkin A.S."/>
            <person name="Kolonay J.F."/>
            <person name="Madupu R."/>
            <person name="Lewis M.R."/>
            <person name="Radune D."/>
            <person name="Fedorova N.B."/>
            <person name="Scanlan D."/>
            <person name="Khouri H.M."/>
            <person name="Mulligan S."/>
            <person name="Carty H.A."/>
            <person name="Cline R.T."/>
            <person name="Van Aken S.E."/>
            <person name="Gill J."/>
            <person name="Scarselli M."/>
            <person name="Mora M."/>
            <person name="Iacobini E.T."/>
            <person name="Brettoni C."/>
            <person name="Galli G."/>
            <person name="Mariani M."/>
            <person name="Vegni F."/>
            <person name="Maione D."/>
            <person name="Rinaudo D."/>
            <person name="Rappuoli R."/>
            <person name="Telford J.L."/>
            <person name="Kasper D.L."/>
            <person name="Grandi G."/>
            <person name="Fraser C.M."/>
        </authorList>
    </citation>
    <scope>NUCLEOTIDE SEQUENCE [LARGE SCALE GENOMIC DNA]</scope>
    <source>
        <strain>ATCC BAA-611 / 2603 V/R</strain>
    </source>
</reference>
<evidence type="ECO:0000255" key="1">
    <source>
        <dbReference type="HAMAP-Rule" id="MF_00412"/>
    </source>
</evidence>
<proteinExistence type="inferred from homology"/>
<dbReference type="EC" id="1.2.1.41" evidence="1"/>
<dbReference type="EMBL" id="AE009948">
    <property type="protein sequence ID" value="AAM99191.1"/>
    <property type="molecule type" value="Genomic_DNA"/>
</dbReference>
<dbReference type="RefSeq" id="NP_687319.1">
    <property type="nucleotide sequence ID" value="NC_004116.1"/>
</dbReference>
<dbReference type="RefSeq" id="WP_000221014.1">
    <property type="nucleotide sequence ID" value="NC_004116.1"/>
</dbReference>
<dbReference type="SMR" id="Q8E1R9"/>
<dbReference type="STRING" id="208435.SAG0284"/>
<dbReference type="KEGG" id="sag:SAG0284"/>
<dbReference type="PATRIC" id="fig|208435.3.peg.282"/>
<dbReference type="HOGENOM" id="CLU_030231_0_0_9"/>
<dbReference type="OrthoDB" id="9809970at2"/>
<dbReference type="UniPathway" id="UPA00098">
    <property type="reaction ID" value="UER00360"/>
</dbReference>
<dbReference type="Proteomes" id="UP000000821">
    <property type="component" value="Chromosome"/>
</dbReference>
<dbReference type="GO" id="GO:0005737">
    <property type="term" value="C:cytoplasm"/>
    <property type="evidence" value="ECO:0007669"/>
    <property type="project" value="UniProtKB-SubCell"/>
</dbReference>
<dbReference type="GO" id="GO:0004350">
    <property type="term" value="F:glutamate-5-semialdehyde dehydrogenase activity"/>
    <property type="evidence" value="ECO:0007669"/>
    <property type="project" value="UniProtKB-UniRule"/>
</dbReference>
<dbReference type="GO" id="GO:0050661">
    <property type="term" value="F:NADP binding"/>
    <property type="evidence" value="ECO:0007669"/>
    <property type="project" value="InterPro"/>
</dbReference>
<dbReference type="GO" id="GO:0055129">
    <property type="term" value="P:L-proline biosynthetic process"/>
    <property type="evidence" value="ECO:0007669"/>
    <property type="project" value="UniProtKB-UniRule"/>
</dbReference>
<dbReference type="CDD" id="cd07079">
    <property type="entry name" value="ALDH_F18-19_ProA-GPR"/>
    <property type="match status" value="1"/>
</dbReference>
<dbReference type="FunFam" id="3.40.309.10:FF:000006">
    <property type="entry name" value="Gamma-glutamyl phosphate reductase"/>
    <property type="match status" value="1"/>
</dbReference>
<dbReference type="Gene3D" id="3.40.605.10">
    <property type="entry name" value="Aldehyde Dehydrogenase, Chain A, domain 1"/>
    <property type="match status" value="1"/>
</dbReference>
<dbReference type="Gene3D" id="3.40.309.10">
    <property type="entry name" value="Aldehyde Dehydrogenase, Chain A, domain 2"/>
    <property type="match status" value="1"/>
</dbReference>
<dbReference type="HAMAP" id="MF_00412">
    <property type="entry name" value="ProA"/>
    <property type="match status" value="1"/>
</dbReference>
<dbReference type="InterPro" id="IPR016161">
    <property type="entry name" value="Ald_DH/histidinol_DH"/>
</dbReference>
<dbReference type="InterPro" id="IPR016163">
    <property type="entry name" value="Ald_DH_C"/>
</dbReference>
<dbReference type="InterPro" id="IPR016162">
    <property type="entry name" value="Ald_DH_N"/>
</dbReference>
<dbReference type="InterPro" id="IPR015590">
    <property type="entry name" value="Aldehyde_DH_dom"/>
</dbReference>
<dbReference type="InterPro" id="IPR020593">
    <property type="entry name" value="G-glutamylP_reductase_CS"/>
</dbReference>
<dbReference type="InterPro" id="IPR012134">
    <property type="entry name" value="Glu-5-SA_DH"/>
</dbReference>
<dbReference type="InterPro" id="IPR000965">
    <property type="entry name" value="GPR_dom"/>
</dbReference>
<dbReference type="NCBIfam" id="NF001221">
    <property type="entry name" value="PRK00197.1"/>
    <property type="match status" value="1"/>
</dbReference>
<dbReference type="NCBIfam" id="TIGR00407">
    <property type="entry name" value="proA"/>
    <property type="match status" value="1"/>
</dbReference>
<dbReference type="PANTHER" id="PTHR11063:SF8">
    <property type="entry name" value="DELTA-1-PYRROLINE-5-CARBOXYLATE SYNTHASE"/>
    <property type="match status" value="1"/>
</dbReference>
<dbReference type="PANTHER" id="PTHR11063">
    <property type="entry name" value="GLUTAMATE SEMIALDEHYDE DEHYDROGENASE"/>
    <property type="match status" value="1"/>
</dbReference>
<dbReference type="Pfam" id="PF00171">
    <property type="entry name" value="Aldedh"/>
    <property type="match status" value="2"/>
</dbReference>
<dbReference type="PIRSF" id="PIRSF000151">
    <property type="entry name" value="GPR"/>
    <property type="match status" value="1"/>
</dbReference>
<dbReference type="SUPFAM" id="SSF53720">
    <property type="entry name" value="ALDH-like"/>
    <property type="match status" value="1"/>
</dbReference>
<dbReference type="PROSITE" id="PS01223">
    <property type="entry name" value="PROA"/>
    <property type="match status" value="1"/>
</dbReference>
<organism>
    <name type="scientific">Streptococcus agalactiae serotype V (strain ATCC BAA-611 / 2603 V/R)</name>
    <dbReference type="NCBI Taxonomy" id="208435"/>
    <lineage>
        <taxon>Bacteria</taxon>
        <taxon>Bacillati</taxon>
        <taxon>Bacillota</taxon>
        <taxon>Bacilli</taxon>
        <taxon>Lactobacillales</taxon>
        <taxon>Streptococcaceae</taxon>
        <taxon>Streptococcus</taxon>
    </lineage>
</organism>
<keyword id="KW-0028">Amino-acid biosynthesis</keyword>
<keyword id="KW-0963">Cytoplasm</keyword>
<keyword id="KW-0521">NADP</keyword>
<keyword id="KW-0560">Oxidoreductase</keyword>
<keyword id="KW-0641">Proline biosynthesis</keyword>
<keyword id="KW-1185">Reference proteome</keyword>
<accession>Q8E1R9</accession>
<comment type="function">
    <text evidence="1">Catalyzes the NADPH-dependent reduction of L-glutamate 5-phosphate into L-glutamate 5-semialdehyde and phosphate. The product spontaneously undergoes cyclization to form 1-pyrroline-5-carboxylate.</text>
</comment>
<comment type="catalytic activity">
    <reaction evidence="1">
        <text>L-glutamate 5-semialdehyde + phosphate + NADP(+) = L-glutamyl 5-phosphate + NADPH + H(+)</text>
        <dbReference type="Rhea" id="RHEA:19541"/>
        <dbReference type="ChEBI" id="CHEBI:15378"/>
        <dbReference type="ChEBI" id="CHEBI:43474"/>
        <dbReference type="ChEBI" id="CHEBI:57783"/>
        <dbReference type="ChEBI" id="CHEBI:58066"/>
        <dbReference type="ChEBI" id="CHEBI:58274"/>
        <dbReference type="ChEBI" id="CHEBI:58349"/>
        <dbReference type="EC" id="1.2.1.41"/>
    </reaction>
</comment>
<comment type="pathway">
    <text evidence="1">Amino-acid biosynthesis; L-proline biosynthesis; L-glutamate 5-semialdehyde from L-glutamate: step 2/2.</text>
</comment>
<comment type="subcellular location">
    <subcellularLocation>
        <location evidence="1">Cytoplasm</location>
    </subcellularLocation>
</comment>
<comment type="similarity">
    <text evidence="1">Belongs to the gamma-glutamyl phosphate reductase family.</text>
</comment>